<sequence length="103" mass="10794">MIVTTTPNIEGYQIATYHGIVTGEAILGANVIRDLFAGITDFIGGRSGAYEKELGRARETALSEMEEAARAKGANAVVGVDLDYEVINNMLMVSASGTAVTIA</sequence>
<name>Y2093_CERS1</name>
<organism>
    <name type="scientific">Cereibacter sphaeroides (strain ATCC 17029 / ATH 2.4.9)</name>
    <name type="common">Rhodobacter sphaeroides</name>
    <dbReference type="NCBI Taxonomy" id="349101"/>
    <lineage>
        <taxon>Bacteria</taxon>
        <taxon>Pseudomonadati</taxon>
        <taxon>Pseudomonadota</taxon>
        <taxon>Alphaproteobacteria</taxon>
        <taxon>Rhodobacterales</taxon>
        <taxon>Paracoccaceae</taxon>
        <taxon>Cereibacter</taxon>
    </lineage>
</organism>
<comment type="similarity">
    <text evidence="1">Belongs to the UPF0145 family.</text>
</comment>
<feature type="chain" id="PRO_1000013024" description="UPF0145 protein Rsph17029_2093">
    <location>
        <begin position="1"/>
        <end position="103"/>
    </location>
</feature>
<dbReference type="EMBL" id="CP000577">
    <property type="protein sequence ID" value="ABN77196.1"/>
    <property type="molecule type" value="Genomic_DNA"/>
</dbReference>
<dbReference type="RefSeq" id="WP_002720603.1">
    <property type="nucleotide sequence ID" value="NC_009049.1"/>
</dbReference>
<dbReference type="SMR" id="A3PLI0"/>
<dbReference type="GeneID" id="67447172"/>
<dbReference type="KEGG" id="rsh:Rsph17029_2093"/>
<dbReference type="HOGENOM" id="CLU_117144_3_2_5"/>
<dbReference type="Gene3D" id="3.30.110.70">
    <property type="entry name" value="Hypothetical protein apc22750. Chain B"/>
    <property type="match status" value="1"/>
</dbReference>
<dbReference type="HAMAP" id="MF_00338">
    <property type="entry name" value="UPF0145"/>
    <property type="match status" value="1"/>
</dbReference>
<dbReference type="InterPro" id="IPR035439">
    <property type="entry name" value="UPF0145_dom_sf"/>
</dbReference>
<dbReference type="InterPro" id="IPR002765">
    <property type="entry name" value="UPF0145_YbjQ-like"/>
</dbReference>
<dbReference type="PANTHER" id="PTHR34068">
    <property type="entry name" value="UPF0145 PROTEIN YBJQ"/>
    <property type="match status" value="1"/>
</dbReference>
<dbReference type="PANTHER" id="PTHR34068:SF1">
    <property type="entry name" value="UPF0145 PROTEIN YBJQ"/>
    <property type="match status" value="1"/>
</dbReference>
<dbReference type="Pfam" id="PF01906">
    <property type="entry name" value="YbjQ_1"/>
    <property type="match status" value="1"/>
</dbReference>
<dbReference type="SUPFAM" id="SSF117782">
    <property type="entry name" value="YbjQ-like"/>
    <property type="match status" value="1"/>
</dbReference>
<evidence type="ECO:0000255" key="1">
    <source>
        <dbReference type="HAMAP-Rule" id="MF_00338"/>
    </source>
</evidence>
<reference key="1">
    <citation type="submission" date="2007-02" db="EMBL/GenBank/DDBJ databases">
        <title>Complete sequence of chromosome 1 of Rhodobacter sphaeroides ATCC 17029.</title>
        <authorList>
            <person name="Copeland A."/>
            <person name="Lucas S."/>
            <person name="Lapidus A."/>
            <person name="Barry K."/>
            <person name="Detter J.C."/>
            <person name="Glavina del Rio T."/>
            <person name="Hammon N."/>
            <person name="Israni S."/>
            <person name="Dalin E."/>
            <person name="Tice H."/>
            <person name="Pitluck S."/>
            <person name="Kiss H."/>
            <person name="Brettin T."/>
            <person name="Bruce D."/>
            <person name="Han C."/>
            <person name="Tapia R."/>
            <person name="Gilna P."/>
            <person name="Schmutz J."/>
            <person name="Larimer F."/>
            <person name="Land M."/>
            <person name="Hauser L."/>
            <person name="Kyrpides N."/>
            <person name="Mikhailova N."/>
            <person name="Richardson P."/>
            <person name="Mackenzie C."/>
            <person name="Choudhary M."/>
            <person name="Donohue T.J."/>
            <person name="Kaplan S."/>
        </authorList>
    </citation>
    <scope>NUCLEOTIDE SEQUENCE [LARGE SCALE GENOMIC DNA]</scope>
    <source>
        <strain>ATCC 17029 / ATH 2.4.9</strain>
    </source>
</reference>
<proteinExistence type="inferred from homology"/>
<gene>
    <name type="ordered locus">Rsph17029_2093</name>
</gene>
<accession>A3PLI0</accession>
<protein>
    <recommendedName>
        <fullName evidence="1">UPF0145 protein Rsph17029_2093</fullName>
    </recommendedName>
</protein>